<accession>C4Z0V2</accession>
<proteinExistence type="inferred from homology"/>
<comment type="catalytic activity">
    <reaction evidence="1">
        <text>2-(N(omega)-L-arginino)succinate = fumarate + L-arginine</text>
        <dbReference type="Rhea" id="RHEA:24020"/>
        <dbReference type="ChEBI" id="CHEBI:29806"/>
        <dbReference type="ChEBI" id="CHEBI:32682"/>
        <dbReference type="ChEBI" id="CHEBI:57472"/>
        <dbReference type="EC" id="4.3.2.1"/>
    </reaction>
</comment>
<comment type="pathway">
    <text evidence="1">Amino-acid biosynthesis; L-arginine biosynthesis; L-arginine from L-ornithine and carbamoyl phosphate: step 3/3.</text>
</comment>
<comment type="subcellular location">
    <subcellularLocation>
        <location evidence="1">Cytoplasm</location>
    </subcellularLocation>
</comment>
<comment type="similarity">
    <text evidence="1">Belongs to the lyase 1 family. Argininosuccinate lyase subfamily.</text>
</comment>
<evidence type="ECO:0000255" key="1">
    <source>
        <dbReference type="HAMAP-Rule" id="MF_00006"/>
    </source>
</evidence>
<dbReference type="EC" id="4.3.2.1" evidence="1"/>
<dbReference type="EMBL" id="CP001104">
    <property type="protein sequence ID" value="ACR72215.1"/>
    <property type="molecule type" value="Genomic_DNA"/>
</dbReference>
<dbReference type="RefSeq" id="WP_012739450.1">
    <property type="nucleotide sequence ID" value="NC_012778.1"/>
</dbReference>
<dbReference type="SMR" id="C4Z0V2"/>
<dbReference type="STRING" id="515620.EUBELI_01217"/>
<dbReference type="GeneID" id="41355936"/>
<dbReference type="KEGG" id="eel:EUBELI_01217"/>
<dbReference type="eggNOG" id="COG0165">
    <property type="taxonomic scope" value="Bacteria"/>
</dbReference>
<dbReference type="HOGENOM" id="CLU_027272_2_3_9"/>
<dbReference type="UniPathway" id="UPA00068">
    <property type="reaction ID" value="UER00114"/>
</dbReference>
<dbReference type="Proteomes" id="UP000001476">
    <property type="component" value="Chromosome"/>
</dbReference>
<dbReference type="GO" id="GO:0005829">
    <property type="term" value="C:cytosol"/>
    <property type="evidence" value="ECO:0007669"/>
    <property type="project" value="TreeGrafter"/>
</dbReference>
<dbReference type="GO" id="GO:0004056">
    <property type="term" value="F:argininosuccinate lyase activity"/>
    <property type="evidence" value="ECO:0007669"/>
    <property type="project" value="UniProtKB-UniRule"/>
</dbReference>
<dbReference type="GO" id="GO:0042450">
    <property type="term" value="P:arginine biosynthetic process via ornithine"/>
    <property type="evidence" value="ECO:0007669"/>
    <property type="project" value="InterPro"/>
</dbReference>
<dbReference type="GO" id="GO:0006526">
    <property type="term" value="P:L-arginine biosynthetic process"/>
    <property type="evidence" value="ECO:0007669"/>
    <property type="project" value="UniProtKB-UniRule"/>
</dbReference>
<dbReference type="CDD" id="cd01359">
    <property type="entry name" value="Argininosuccinate_lyase"/>
    <property type="match status" value="1"/>
</dbReference>
<dbReference type="FunFam" id="1.10.275.10:FF:000002">
    <property type="entry name" value="Argininosuccinate lyase"/>
    <property type="match status" value="1"/>
</dbReference>
<dbReference type="FunFam" id="1.10.40.30:FF:000001">
    <property type="entry name" value="Argininosuccinate lyase"/>
    <property type="match status" value="1"/>
</dbReference>
<dbReference type="FunFam" id="1.20.200.10:FF:000015">
    <property type="entry name" value="argininosuccinate lyase isoform X2"/>
    <property type="match status" value="1"/>
</dbReference>
<dbReference type="Gene3D" id="1.10.40.30">
    <property type="entry name" value="Fumarase/aspartase (C-terminal domain)"/>
    <property type="match status" value="1"/>
</dbReference>
<dbReference type="Gene3D" id="1.20.200.10">
    <property type="entry name" value="Fumarase/aspartase (Central domain)"/>
    <property type="match status" value="1"/>
</dbReference>
<dbReference type="Gene3D" id="1.10.275.10">
    <property type="entry name" value="Fumarase/aspartase (N-terminal domain)"/>
    <property type="match status" value="1"/>
</dbReference>
<dbReference type="HAMAP" id="MF_00006">
    <property type="entry name" value="Arg_succ_lyase"/>
    <property type="match status" value="1"/>
</dbReference>
<dbReference type="InterPro" id="IPR029419">
    <property type="entry name" value="Arg_succ_lyase_C"/>
</dbReference>
<dbReference type="InterPro" id="IPR009049">
    <property type="entry name" value="Argininosuccinate_lyase"/>
</dbReference>
<dbReference type="InterPro" id="IPR024083">
    <property type="entry name" value="Fumarase/histidase_N"/>
</dbReference>
<dbReference type="InterPro" id="IPR020557">
    <property type="entry name" value="Fumarate_lyase_CS"/>
</dbReference>
<dbReference type="InterPro" id="IPR000362">
    <property type="entry name" value="Fumarate_lyase_fam"/>
</dbReference>
<dbReference type="InterPro" id="IPR022761">
    <property type="entry name" value="Fumarate_lyase_N"/>
</dbReference>
<dbReference type="InterPro" id="IPR008948">
    <property type="entry name" value="L-Aspartase-like"/>
</dbReference>
<dbReference type="NCBIfam" id="TIGR00838">
    <property type="entry name" value="argH"/>
    <property type="match status" value="1"/>
</dbReference>
<dbReference type="PANTHER" id="PTHR43814">
    <property type="entry name" value="ARGININOSUCCINATE LYASE"/>
    <property type="match status" value="1"/>
</dbReference>
<dbReference type="PANTHER" id="PTHR43814:SF1">
    <property type="entry name" value="ARGININOSUCCINATE LYASE"/>
    <property type="match status" value="1"/>
</dbReference>
<dbReference type="Pfam" id="PF14698">
    <property type="entry name" value="ASL_C2"/>
    <property type="match status" value="1"/>
</dbReference>
<dbReference type="Pfam" id="PF00206">
    <property type="entry name" value="Lyase_1"/>
    <property type="match status" value="1"/>
</dbReference>
<dbReference type="PRINTS" id="PR00145">
    <property type="entry name" value="ARGSUCLYASE"/>
</dbReference>
<dbReference type="PRINTS" id="PR00149">
    <property type="entry name" value="FUMRATELYASE"/>
</dbReference>
<dbReference type="SUPFAM" id="SSF48557">
    <property type="entry name" value="L-aspartase-like"/>
    <property type="match status" value="1"/>
</dbReference>
<dbReference type="PROSITE" id="PS00163">
    <property type="entry name" value="FUMARATE_LYASES"/>
    <property type="match status" value="1"/>
</dbReference>
<keyword id="KW-0028">Amino-acid biosynthesis</keyword>
<keyword id="KW-0055">Arginine biosynthesis</keyword>
<keyword id="KW-0963">Cytoplasm</keyword>
<keyword id="KW-0456">Lyase</keyword>
<keyword id="KW-1185">Reference proteome</keyword>
<feature type="chain" id="PRO_1000201698" description="Argininosuccinate lyase">
    <location>
        <begin position="1"/>
        <end position="458"/>
    </location>
</feature>
<name>ARLY_LACE2</name>
<reference key="1">
    <citation type="journal article" date="2009" name="Proc. Natl. Acad. Sci. U.S.A.">
        <title>Characterizing a model human gut microbiota composed of members of its two dominant bacterial phyla.</title>
        <authorList>
            <person name="Mahowald M.A."/>
            <person name="Rey F.E."/>
            <person name="Seedorf H."/>
            <person name="Turnbaugh P.J."/>
            <person name="Fulton R.S."/>
            <person name="Wollam A."/>
            <person name="Shah N."/>
            <person name="Wang C."/>
            <person name="Magrini V."/>
            <person name="Wilson R.K."/>
            <person name="Cantarel B.L."/>
            <person name="Coutinho P.M."/>
            <person name="Henrissat B."/>
            <person name="Crock L.W."/>
            <person name="Russell A."/>
            <person name="Verberkmoes N.C."/>
            <person name="Hettich R.L."/>
            <person name="Gordon J.I."/>
        </authorList>
    </citation>
    <scope>NUCLEOTIDE SEQUENCE [LARGE SCALE GENOMIC DNA]</scope>
    <source>
        <strain>ATCC 27750 / DSM 3376 / VPI C15-48 / C15-B4</strain>
    </source>
</reference>
<organism>
    <name type="scientific">Lachnospira eligens (strain ATCC 27750 / DSM 3376 / VPI C15-48 / C15-B4)</name>
    <name type="common">Eubacterium eligens</name>
    <dbReference type="NCBI Taxonomy" id="515620"/>
    <lineage>
        <taxon>Bacteria</taxon>
        <taxon>Bacillati</taxon>
        <taxon>Bacillota</taxon>
        <taxon>Clostridia</taxon>
        <taxon>Lachnospirales</taxon>
        <taxon>Lachnospiraceae</taxon>
        <taxon>Lachnospira</taxon>
    </lineage>
</organism>
<protein>
    <recommendedName>
        <fullName evidence="1">Argininosuccinate lyase</fullName>
        <shortName evidence="1">ASAL</shortName>
        <ecNumber evidence="1">4.3.2.1</ecNumber>
    </recommendedName>
    <alternativeName>
        <fullName evidence="1">Arginosuccinase</fullName>
    </alternativeName>
</protein>
<gene>
    <name evidence="1" type="primary">argH</name>
    <name type="ordered locus">EUBELI_01217</name>
</gene>
<sequence>MKLWGGRFTKETNELVNNFNASISFDQKFYKQDIEGSIAHATMLGKQGIIPESESEQIVEGLKGILADIESGKLEITDEYEDIHTFMEATLIERIGDAGKRLHTGRSRNDQVALDMRLFTRQEVLNTDAELKELMAVILRIMKENTHTFMPGFTHLQKAQPVTVAHHFGAYFEMFKRDRSRLHDIYERMNYCPLGAGALAGTTYPLDRELTASLLGFYGPTLNSMDSVSDRDYLIEFLSALSTIMMHLSRFSEEICIWNSNEYRFIELDDAFSTGSSIMPQKKNPDIAELVRGKTGRVYGALISLLTTMKGIPLAYNKDMQEDKELSFDAFDTAKGCISLFKGMIDTMKFNNKRMEASAKNGFTNATDAADYLVKKGVPFREAHGIVGQLVLMCIEKNIALDDLSLDEYKAVSPVFDEDIYEAISLQTCVDKRLTLGAPGPEVMNKVIAIYDKYMEEN</sequence>